<proteinExistence type="inferred from homology"/>
<name>CODY_STRPI</name>
<sequence length="262" mass="29756">MAHLLEKTRKITSILKRSEEQLQDELPYNAITRQLADIIHCNACIINSKGRLLGYFMRYKTNTDRVEQFFQTKIFPDDYVQGANMIYETEANLPVEHDMSIFPVESRDDFPDGLTTIAPIHVSGIRLGSLIIWRNDKKFEDEDLVLVEIASTVVGIQLLNFQREEDEKNIRRRTAVTMAVNTLSYSELRAVSAILGELNGNEGKLTASVIADRIGITRSVIVNALRKLESAGIIESRSLGMKGTYLKVLISDIFEEVKKRDY</sequence>
<evidence type="ECO:0000255" key="1">
    <source>
        <dbReference type="HAMAP-Rule" id="MF_00621"/>
    </source>
</evidence>
<keyword id="KW-0963">Cytoplasm</keyword>
<keyword id="KW-0238">DNA-binding</keyword>
<keyword id="KW-0678">Repressor</keyword>
<keyword id="KW-0804">Transcription</keyword>
<keyword id="KW-0805">Transcription regulation</keyword>
<protein>
    <recommendedName>
        <fullName evidence="1">Global transcriptional regulator CodY</fullName>
    </recommendedName>
</protein>
<gene>
    <name evidence="1" type="primary">codY</name>
    <name type="ordered locus">SPH_1697</name>
</gene>
<comment type="function">
    <text evidence="1">DNA-binding global transcriptional regulator which is involved in the adaptive response to starvation and acts by directly or indirectly controlling the expression of numerous genes in response to nutrient availability. During rapid exponential growth, CodY is highly active and represses genes whose products allow adaptation to nutrient depletion.</text>
</comment>
<comment type="subcellular location">
    <subcellularLocation>
        <location evidence="1">Cytoplasm</location>
    </subcellularLocation>
</comment>
<comment type="similarity">
    <text evidence="1">Belongs to the CodY family.</text>
</comment>
<organism>
    <name type="scientific">Streptococcus pneumoniae (strain Hungary19A-6)</name>
    <dbReference type="NCBI Taxonomy" id="487214"/>
    <lineage>
        <taxon>Bacteria</taxon>
        <taxon>Bacillati</taxon>
        <taxon>Bacillota</taxon>
        <taxon>Bacilli</taxon>
        <taxon>Lactobacillales</taxon>
        <taxon>Streptococcaceae</taxon>
        <taxon>Streptococcus</taxon>
    </lineage>
</organism>
<feature type="chain" id="PRO_1000130458" description="Global transcriptional regulator CodY">
    <location>
        <begin position="1"/>
        <end position="262"/>
    </location>
</feature>
<feature type="DNA-binding region" description="H-T-H motif" evidence="1">
    <location>
        <begin position="207"/>
        <end position="226"/>
    </location>
</feature>
<feature type="region of interest" description="GAF domain" evidence="1">
    <location>
        <begin position="1"/>
        <end position="159"/>
    </location>
</feature>
<reference key="1">
    <citation type="journal article" date="2010" name="Genome Biol.">
        <title>Structure and dynamics of the pan-genome of Streptococcus pneumoniae and closely related species.</title>
        <authorList>
            <person name="Donati C."/>
            <person name="Hiller N.L."/>
            <person name="Tettelin H."/>
            <person name="Muzzi A."/>
            <person name="Croucher N.J."/>
            <person name="Angiuoli S.V."/>
            <person name="Oggioni M."/>
            <person name="Dunning Hotopp J.C."/>
            <person name="Hu F.Z."/>
            <person name="Riley D.R."/>
            <person name="Covacci A."/>
            <person name="Mitchell T.J."/>
            <person name="Bentley S.D."/>
            <person name="Kilian M."/>
            <person name="Ehrlich G.D."/>
            <person name="Rappuoli R."/>
            <person name="Moxon E.R."/>
            <person name="Masignani V."/>
        </authorList>
    </citation>
    <scope>NUCLEOTIDE SEQUENCE [LARGE SCALE GENOMIC DNA]</scope>
    <source>
        <strain>Hungary19A-6</strain>
    </source>
</reference>
<accession>B1ID02</accession>
<dbReference type="EMBL" id="CP000936">
    <property type="protein sequence ID" value="ACA35574.1"/>
    <property type="molecule type" value="Genomic_DNA"/>
</dbReference>
<dbReference type="RefSeq" id="WP_000940733.1">
    <property type="nucleotide sequence ID" value="NC_010380.1"/>
</dbReference>
<dbReference type="SMR" id="B1ID02"/>
<dbReference type="GeneID" id="45653181"/>
<dbReference type="KEGG" id="spv:SPH_1697"/>
<dbReference type="HOGENOM" id="CLU_089581_0_0_9"/>
<dbReference type="Proteomes" id="UP000002163">
    <property type="component" value="Chromosome"/>
</dbReference>
<dbReference type="GO" id="GO:0005737">
    <property type="term" value="C:cytoplasm"/>
    <property type="evidence" value="ECO:0007669"/>
    <property type="project" value="UniProtKB-SubCell"/>
</dbReference>
<dbReference type="GO" id="GO:0003677">
    <property type="term" value="F:DNA binding"/>
    <property type="evidence" value="ECO:0007669"/>
    <property type="project" value="UniProtKB-UniRule"/>
</dbReference>
<dbReference type="GO" id="GO:0003700">
    <property type="term" value="F:DNA-binding transcription factor activity"/>
    <property type="evidence" value="ECO:0007669"/>
    <property type="project" value="InterPro"/>
</dbReference>
<dbReference type="GO" id="GO:0005525">
    <property type="term" value="F:GTP binding"/>
    <property type="evidence" value="ECO:0007669"/>
    <property type="project" value="InterPro"/>
</dbReference>
<dbReference type="GO" id="GO:0045892">
    <property type="term" value="P:negative regulation of DNA-templated transcription"/>
    <property type="evidence" value="ECO:0007669"/>
    <property type="project" value="UniProtKB-UniRule"/>
</dbReference>
<dbReference type="CDD" id="cd00090">
    <property type="entry name" value="HTH_ARSR"/>
    <property type="match status" value="1"/>
</dbReference>
<dbReference type="FunFam" id="1.10.10.10:FF:000034">
    <property type="entry name" value="GTP-sensing transcriptional pleiotropic repressor CodY"/>
    <property type="match status" value="1"/>
</dbReference>
<dbReference type="FunFam" id="3.30.450.40:FF:000003">
    <property type="entry name" value="GTP-sensing transcriptional pleiotropic repressor CodY"/>
    <property type="match status" value="1"/>
</dbReference>
<dbReference type="Gene3D" id="3.30.450.40">
    <property type="match status" value="1"/>
</dbReference>
<dbReference type="Gene3D" id="1.10.10.10">
    <property type="entry name" value="Winged helix-like DNA-binding domain superfamily/Winged helix DNA-binding domain"/>
    <property type="match status" value="1"/>
</dbReference>
<dbReference type="HAMAP" id="MF_00621">
    <property type="entry name" value="HTH_type_CodY"/>
    <property type="match status" value="1"/>
</dbReference>
<dbReference type="InterPro" id="IPR011991">
    <property type="entry name" value="ArsR-like_HTH"/>
</dbReference>
<dbReference type="InterPro" id="IPR014154">
    <property type="entry name" value="CodY"/>
</dbReference>
<dbReference type="InterPro" id="IPR029016">
    <property type="entry name" value="GAF-like_dom_sf"/>
</dbReference>
<dbReference type="InterPro" id="IPR013198">
    <property type="entry name" value="GTP_trans_reg_CodY_C"/>
</dbReference>
<dbReference type="InterPro" id="IPR010312">
    <property type="entry name" value="Transc_reg_CodY_N"/>
</dbReference>
<dbReference type="InterPro" id="IPR036388">
    <property type="entry name" value="WH-like_DNA-bd_sf"/>
</dbReference>
<dbReference type="InterPro" id="IPR036390">
    <property type="entry name" value="WH_DNA-bd_sf"/>
</dbReference>
<dbReference type="NCBIfam" id="TIGR02787">
    <property type="entry name" value="codY_Gpos"/>
    <property type="match status" value="1"/>
</dbReference>
<dbReference type="NCBIfam" id="NF003170">
    <property type="entry name" value="PRK04158.1"/>
    <property type="match status" value="1"/>
</dbReference>
<dbReference type="PANTHER" id="PTHR40062:SF1">
    <property type="entry name" value="GLOBAL TRANSCRIPTIONAL REGULATOR CODY"/>
    <property type="match status" value="1"/>
</dbReference>
<dbReference type="PANTHER" id="PTHR40062">
    <property type="entry name" value="GTP-SENSING TRANSCRIPTIONAL PLEIOTROPIC REPRESSOR CODY"/>
    <property type="match status" value="1"/>
</dbReference>
<dbReference type="Pfam" id="PF06018">
    <property type="entry name" value="CodY"/>
    <property type="match status" value="1"/>
</dbReference>
<dbReference type="Pfam" id="PF08222">
    <property type="entry name" value="HTH_CodY"/>
    <property type="match status" value="1"/>
</dbReference>
<dbReference type="PIRSF" id="PIRSF011572">
    <property type="entry name" value="GTP_sensing_CodY"/>
    <property type="match status" value="1"/>
</dbReference>
<dbReference type="SUPFAM" id="SSF46785">
    <property type="entry name" value="Winged helix' DNA-binding domain"/>
    <property type="match status" value="1"/>
</dbReference>